<proteinExistence type="inferred from homology"/>
<organism>
    <name type="scientific">Escherichia coli O45:K1 (strain S88 / ExPEC)</name>
    <dbReference type="NCBI Taxonomy" id="585035"/>
    <lineage>
        <taxon>Bacteria</taxon>
        <taxon>Pseudomonadati</taxon>
        <taxon>Pseudomonadota</taxon>
        <taxon>Gammaproteobacteria</taxon>
        <taxon>Enterobacterales</taxon>
        <taxon>Enterobacteriaceae</taxon>
        <taxon>Escherichia</taxon>
    </lineage>
</organism>
<gene>
    <name evidence="1" type="primary">glpB</name>
    <name type="ordered locus">ECS88_2389</name>
</gene>
<sequence>MRFDTVIMGGGLAGLLCGLQLQKHGLRCAIVTRGQSALHFSSGSLDLLSHLPDGQPVTDIHSGLESLRQQAPAHPYTLLGPQRVLDLACQAQALIAESGAQLQGSVELAHQRITPLGTLRSTWLSSPEVPVWPLPAKKICVVGISGLMDFQAHLAAASLRELDLAVETAEIELPELDVLRNNATEFRAVNIARFLDNEENWPLIIDALIPVANTCEMILMPACFGLADDKLWRWLNEKLPCSLMLLPTLPPSVLGIRLQNQLQRQFVRQGGVWMPGDEVKKVTCKNGVVNEIWTRNHADIPLRPRFAVLASGSFFSGGLVAERDGIREPILGLDVLQTATRGEWYKGDFFAPQPWQQFGVTTDEALRPSQAGQTIENLFAIGSVLGGFDPIAQGCGGGVCAVSALHAAQQIAQRAGGQQ</sequence>
<comment type="function">
    <text evidence="1">Conversion of glycerol 3-phosphate to dihydroxyacetone. Uses fumarate or nitrate as electron acceptor.</text>
</comment>
<comment type="catalytic activity">
    <reaction evidence="1">
        <text>a quinone + sn-glycerol 3-phosphate = dihydroxyacetone phosphate + a quinol</text>
        <dbReference type="Rhea" id="RHEA:18977"/>
        <dbReference type="ChEBI" id="CHEBI:24646"/>
        <dbReference type="ChEBI" id="CHEBI:57597"/>
        <dbReference type="ChEBI" id="CHEBI:57642"/>
        <dbReference type="ChEBI" id="CHEBI:132124"/>
        <dbReference type="EC" id="1.1.5.3"/>
    </reaction>
</comment>
<comment type="cofactor">
    <cofactor evidence="1">
        <name>FMN</name>
        <dbReference type="ChEBI" id="CHEBI:58210"/>
    </cofactor>
</comment>
<comment type="pathway">
    <text evidence="1">Polyol metabolism; glycerol degradation via glycerol kinase pathway; glycerone phosphate from sn-glycerol 3-phosphate (anaerobic route): step 1/1.</text>
</comment>
<comment type="subunit">
    <text evidence="1">Composed of a catalytic GlpA/B dimer and of membrane bound GlpC.</text>
</comment>
<comment type="similarity">
    <text evidence="1">Belongs to the anaerobic G-3-P dehydrogenase subunit B family.</text>
</comment>
<dbReference type="EC" id="1.1.5.3" evidence="1"/>
<dbReference type="EMBL" id="CU928161">
    <property type="protein sequence ID" value="CAR03669.1"/>
    <property type="molecule type" value="Genomic_DNA"/>
</dbReference>
<dbReference type="RefSeq" id="WP_001209932.1">
    <property type="nucleotide sequence ID" value="NC_011742.1"/>
</dbReference>
<dbReference type="KEGG" id="ecz:ECS88_2389"/>
<dbReference type="HOGENOM" id="CLU_047793_0_0_6"/>
<dbReference type="UniPathway" id="UPA00618">
    <property type="reaction ID" value="UER00673"/>
</dbReference>
<dbReference type="Proteomes" id="UP000000747">
    <property type="component" value="Chromosome"/>
</dbReference>
<dbReference type="GO" id="GO:0009331">
    <property type="term" value="C:glycerol-3-phosphate dehydrogenase (FAD) complex"/>
    <property type="evidence" value="ECO:0007669"/>
    <property type="project" value="InterPro"/>
</dbReference>
<dbReference type="GO" id="GO:0004368">
    <property type="term" value="F:glycerol-3-phosphate dehydrogenase (quinone) activity"/>
    <property type="evidence" value="ECO:0007669"/>
    <property type="project" value="UniProtKB-UniRule"/>
</dbReference>
<dbReference type="GO" id="GO:0009061">
    <property type="term" value="P:anaerobic respiration"/>
    <property type="evidence" value="ECO:0007669"/>
    <property type="project" value="TreeGrafter"/>
</dbReference>
<dbReference type="GO" id="GO:0019563">
    <property type="term" value="P:glycerol catabolic process"/>
    <property type="evidence" value="ECO:0007669"/>
    <property type="project" value="UniProtKB-UniRule"/>
</dbReference>
<dbReference type="GO" id="GO:0046168">
    <property type="term" value="P:glycerol-3-phosphate catabolic process"/>
    <property type="evidence" value="ECO:0007669"/>
    <property type="project" value="TreeGrafter"/>
</dbReference>
<dbReference type="Gene3D" id="3.50.50.60">
    <property type="entry name" value="FAD/NAD(P)-binding domain"/>
    <property type="match status" value="1"/>
</dbReference>
<dbReference type="HAMAP" id="MF_00753">
    <property type="entry name" value="Glycerol3P_GlpB"/>
    <property type="match status" value="1"/>
</dbReference>
<dbReference type="InterPro" id="IPR003953">
    <property type="entry name" value="FAD-dep_OxRdtase_2_FAD-bd"/>
</dbReference>
<dbReference type="InterPro" id="IPR050315">
    <property type="entry name" value="FAD-oxidoreductase_2"/>
</dbReference>
<dbReference type="InterPro" id="IPR036188">
    <property type="entry name" value="FAD/NAD-bd_sf"/>
</dbReference>
<dbReference type="InterPro" id="IPR009158">
    <property type="entry name" value="G3P_DH_GlpB_su"/>
</dbReference>
<dbReference type="NCBIfam" id="TIGR03378">
    <property type="entry name" value="glycerol3P_GlpB"/>
    <property type="match status" value="1"/>
</dbReference>
<dbReference type="NCBIfam" id="NF003718">
    <property type="entry name" value="PRK05329.1-1"/>
    <property type="match status" value="1"/>
</dbReference>
<dbReference type="NCBIfam" id="NF003719">
    <property type="entry name" value="PRK05329.1-2"/>
    <property type="match status" value="1"/>
</dbReference>
<dbReference type="NCBIfam" id="NF003720">
    <property type="entry name" value="PRK05329.1-3"/>
    <property type="match status" value="1"/>
</dbReference>
<dbReference type="NCBIfam" id="NF003721">
    <property type="entry name" value="PRK05329.1-4"/>
    <property type="match status" value="1"/>
</dbReference>
<dbReference type="PANTHER" id="PTHR43400:SF11">
    <property type="entry name" value="ANAEROBIC GLYCEROL-3-PHOSPHATE DEHYDROGENASE SUBUNIT B"/>
    <property type="match status" value="1"/>
</dbReference>
<dbReference type="PANTHER" id="PTHR43400">
    <property type="entry name" value="FUMARATE REDUCTASE"/>
    <property type="match status" value="1"/>
</dbReference>
<dbReference type="Pfam" id="PF00890">
    <property type="entry name" value="FAD_binding_2"/>
    <property type="match status" value="1"/>
</dbReference>
<dbReference type="PIRSF" id="PIRSF000141">
    <property type="entry name" value="Anaerobic_G3P_dh"/>
    <property type="match status" value="1"/>
</dbReference>
<dbReference type="SUPFAM" id="SSF51905">
    <property type="entry name" value="FAD/NAD(P)-binding domain"/>
    <property type="match status" value="1"/>
</dbReference>
<name>GLPB_ECO45</name>
<evidence type="ECO:0000255" key="1">
    <source>
        <dbReference type="HAMAP-Rule" id="MF_00753"/>
    </source>
</evidence>
<keyword id="KW-0285">Flavoprotein</keyword>
<keyword id="KW-0288">FMN</keyword>
<keyword id="KW-0560">Oxidoreductase</keyword>
<keyword id="KW-1185">Reference proteome</keyword>
<feature type="chain" id="PRO_1000133355" description="Anaerobic glycerol-3-phosphate dehydrogenase subunit B">
    <location>
        <begin position="1"/>
        <end position="419"/>
    </location>
</feature>
<protein>
    <recommendedName>
        <fullName evidence="1">Anaerobic glycerol-3-phosphate dehydrogenase subunit B</fullName>
        <shortName evidence="1">Anaerobic G-3-P dehydrogenase subunit B</shortName>
        <shortName evidence="1">Anaerobic G3Pdhase B</shortName>
        <ecNumber evidence="1">1.1.5.3</ecNumber>
    </recommendedName>
</protein>
<accession>B7MG07</accession>
<reference key="1">
    <citation type="journal article" date="2009" name="PLoS Genet.">
        <title>Organised genome dynamics in the Escherichia coli species results in highly diverse adaptive paths.</title>
        <authorList>
            <person name="Touchon M."/>
            <person name="Hoede C."/>
            <person name="Tenaillon O."/>
            <person name="Barbe V."/>
            <person name="Baeriswyl S."/>
            <person name="Bidet P."/>
            <person name="Bingen E."/>
            <person name="Bonacorsi S."/>
            <person name="Bouchier C."/>
            <person name="Bouvet O."/>
            <person name="Calteau A."/>
            <person name="Chiapello H."/>
            <person name="Clermont O."/>
            <person name="Cruveiller S."/>
            <person name="Danchin A."/>
            <person name="Diard M."/>
            <person name="Dossat C."/>
            <person name="Karoui M.E."/>
            <person name="Frapy E."/>
            <person name="Garry L."/>
            <person name="Ghigo J.M."/>
            <person name="Gilles A.M."/>
            <person name="Johnson J."/>
            <person name="Le Bouguenec C."/>
            <person name="Lescat M."/>
            <person name="Mangenot S."/>
            <person name="Martinez-Jehanne V."/>
            <person name="Matic I."/>
            <person name="Nassif X."/>
            <person name="Oztas S."/>
            <person name="Petit M.A."/>
            <person name="Pichon C."/>
            <person name="Rouy Z."/>
            <person name="Ruf C.S."/>
            <person name="Schneider D."/>
            <person name="Tourret J."/>
            <person name="Vacherie B."/>
            <person name="Vallenet D."/>
            <person name="Medigue C."/>
            <person name="Rocha E.P.C."/>
            <person name="Denamur E."/>
        </authorList>
    </citation>
    <scope>NUCLEOTIDE SEQUENCE [LARGE SCALE GENOMIC DNA]</scope>
    <source>
        <strain>S88 / ExPEC</strain>
    </source>
</reference>